<evidence type="ECO:0000255" key="1"/>
<evidence type="ECO:0000269" key="2">
    <source>
    </source>
</evidence>
<evidence type="ECO:0000303" key="3">
    <source>
    </source>
</evidence>
<evidence type="ECO:0000305" key="4"/>
<evidence type="ECO:0000312" key="5">
    <source>
        <dbReference type="EMBL" id="EUB75886.1"/>
    </source>
</evidence>
<evidence type="ECO:0000312" key="6">
    <source>
        <dbReference type="Proteomes" id="UP000007282"/>
    </source>
</evidence>
<protein>
    <recommendedName>
        <fullName evidence="3">Methanethiol S-methyltransferase</fullName>
        <ecNumber evidence="2">2.1.1.334</ecNumber>
    </recommendedName>
</protein>
<dbReference type="EC" id="2.1.1.334" evidence="2"/>
<dbReference type="EMBL" id="AKJN02000006">
    <property type="protein sequence ID" value="EUB75886.1"/>
    <property type="molecule type" value="Genomic_DNA"/>
</dbReference>
<dbReference type="RefSeq" id="WP_008148420.1">
    <property type="nucleotide sequence ID" value="NZ_AKJN02000006.1"/>
</dbReference>
<dbReference type="BRENDA" id="2.1.1.334">
    <property type="organism ID" value="17210"/>
</dbReference>
<dbReference type="Proteomes" id="UP000007282">
    <property type="component" value="Unassembled WGS sequence"/>
</dbReference>
<dbReference type="GO" id="GO:0016020">
    <property type="term" value="C:membrane"/>
    <property type="evidence" value="ECO:0007669"/>
    <property type="project" value="UniProtKB-SubCell"/>
</dbReference>
<dbReference type="GO" id="GO:0008168">
    <property type="term" value="F:methyltransferase activity"/>
    <property type="evidence" value="ECO:0007669"/>
    <property type="project" value="UniProtKB-KW"/>
</dbReference>
<dbReference type="GO" id="GO:0032259">
    <property type="term" value="P:methylation"/>
    <property type="evidence" value="ECO:0007669"/>
    <property type="project" value="UniProtKB-KW"/>
</dbReference>
<dbReference type="Gene3D" id="1.20.120.1630">
    <property type="match status" value="1"/>
</dbReference>
<dbReference type="InterPro" id="IPR054700">
    <property type="entry name" value="MddA"/>
</dbReference>
<dbReference type="InterPro" id="IPR033580">
    <property type="entry name" value="Nurim-like"/>
</dbReference>
<dbReference type="NCBIfam" id="NF045656">
    <property type="entry name" value="MeththiolMtaseMddA"/>
    <property type="match status" value="1"/>
</dbReference>
<dbReference type="PANTHER" id="PTHR31040">
    <property type="entry name" value="NURIM"/>
    <property type="match status" value="1"/>
</dbReference>
<dbReference type="PANTHER" id="PTHR31040:SF1">
    <property type="entry name" value="NURIM"/>
    <property type="match status" value="1"/>
</dbReference>
<gene>
    <name evidence="3" type="primary">mddA</name>
    <name evidence="5" type="ORF">PMI27_002062</name>
</gene>
<accession>W6VBF4</accession>
<reference key="1">
    <citation type="journal article" date="2012" name="J. Bacteriol.">
        <title>Twenty-one genome sequences from Pseudomonas species and 19 genome sequences from diverse bacteria isolated from the rhizosphere and endosphere of Populus deltoides.</title>
        <authorList>
            <person name="Brown S.D."/>
            <person name="Utturkar S.M."/>
            <person name="Klingeman D.M."/>
            <person name="Johnson C.M."/>
            <person name="Martin S.L."/>
            <person name="Land M.L."/>
            <person name="Lu T.Y."/>
            <person name="Schadt C.W."/>
            <person name="Doktycz M.J."/>
            <person name="Pelletier D.A."/>
        </authorList>
    </citation>
    <scope>NUCLEOTIDE SEQUENCE [LARGE SCALE GENOMIC DNA]</scope>
    <source>
        <strain evidence="6">GM41(2012)</strain>
    </source>
</reference>
<reference key="2">
    <citation type="journal article" date="2015" name="Nat. Commun.">
        <title>A novel pathway producing dimethylsulphide in bacteria is widespread in soil environments.</title>
        <authorList>
            <person name="Carrion O."/>
            <person name="Curson A.R."/>
            <person name="Kumaresan D."/>
            <person name="Fu Y."/>
            <person name="Lang A.S."/>
            <person name="Mercade E."/>
            <person name="Todd J.D."/>
        </authorList>
    </citation>
    <scope>FUNCTION</scope>
    <scope>CATALYTIC ACTIVITY</scope>
    <source>
        <strain>GM41(2012)</strain>
    </source>
</reference>
<proteinExistence type="evidence at protein level"/>
<organism>
    <name type="scientific">Pseudomonas sp. (strain GM41(2012))</name>
    <dbReference type="NCBI Taxonomy" id="1144708"/>
    <lineage>
        <taxon>Bacteria</taxon>
        <taxon>Pseudomonadati</taxon>
        <taxon>Pseudomonadota</taxon>
        <taxon>Gammaproteobacteria</taxon>
        <taxon>Pseudomonadales</taxon>
        <taxon>Pseudomonadaceae</taxon>
        <taxon>Pseudomonas</taxon>
    </lineage>
</organism>
<keyword id="KW-0472">Membrane</keyword>
<keyword id="KW-0489">Methyltransferase</keyword>
<keyword id="KW-0949">S-adenosyl-L-methionine</keyword>
<keyword id="KW-0808">Transferase</keyword>
<keyword id="KW-0812">Transmembrane</keyword>
<keyword id="KW-1133">Transmembrane helix</keyword>
<sequence length="260" mass="29447">MNPPNRTGHRFFVFSGKLAGLLYSLCCYLFFLLTALYLIGFLAGIGVPKDINSGPGITWPLAVLVDAILITLFAAQHSGMARKNFKRWWMRFIPATLERATYVLSSCLVLALLFVLWQPIATPVWNVESPWGKGLLIALFWLGWGIVLLATFLISHFELFGVKQTLDAWRKRIPEKPAFKSPWLYKLVRHPLYVGFLIAFWATPDMTAGHLLFAILSTSYILIGAHLEEKDLVDSLGEVYQSYQQEVGMLVPKRNQTKGR</sequence>
<feature type="chain" id="PRO_0000444497" description="Methanethiol S-methyltransferase">
    <location>
        <begin position="1"/>
        <end position="260"/>
    </location>
</feature>
<feature type="transmembrane region" description="Helical" evidence="1">
    <location>
        <begin position="27"/>
        <end position="47"/>
    </location>
</feature>
<feature type="transmembrane region" description="Helical" evidence="1">
    <location>
        <begin position="55"/>
        <end position="75"/>
    </location>
</feature>
<feature type="transmembrane region" description="Helical" evidence="1">
    <location>
        <begin position="107"/>
        <end position="127"/>
    </location>
</feature>
<feature type="transmembrane region" description="Helical" evidence="1">
    <location>
        <begin position="134"/>
        <end position="154"/>
    </location>
</feature>
<feature type="transmembrane region" description="Helical" evidence="1">
    <location>
        <begin position="196"/>
        <end position="216"/>
    </location>
</feature>
<comment type="function">
    <text evidence="2">Catalyzes the methylation of methanethiol (MeSH) to yield dimethylsulphide (DMS).</text>
</comment>
<comment type="catalytic activity">
    <reaction evidence="2">
        <text>methanethiol + S-adenosyl-L-methionine = dimethyl sulfide + S-adenosyl-L-homocysteine + H(+)</text>
        <dbReference type="Rhea" id="RHEA:50428"/>
        <dbReference type="ChEBI" id="CHEBI:15378"/>
        <dbReference type="ChEBI" id="CHEBI:16007"/>
        <dbReference type="ChEBI" id="CHEBI:17437"/>
        <dbReference type="ChEBI" id="CHEBI:57856"/>
        <dbReference type="ChEBI" id="CHEBI:59789"/>
        <dbReference type="EC" id="2.1.1.334"/>
    </reaction>
</comment>
<comment type="subcellular location">
    <subcellularLocation>
        <location evidence="1">Membrane</location>
        <topology evidence="1">Multi-pass membrane protein</topology>
    </subcellularLocation>
</comment>
<comment type="similarity">
    <text evidence="4">Belongs to the nurim family.</text>
</comment>
<name>MDDA_PSESZ</name>